<proteinExistence type="evidence at transcript level"/>
<feature type="chain" id="PRO_0000314856" description="Keratin, type I cytoskeletal 40">
    <location>
        <begin position="1"/>
        <end position="431"/>
    </location>
</feature>
<feature type="domain" description="IF rod" evidence="2">
    <location>
        <begin position="89"/>
        <end position="400"/>
    </location>
</feature>
<feature type="region of interest" description="Head">
    <location>
        <begin position="1"/>
        <end position="89"/>
    </location>
</feature>
<feature type="region of interest" description="Coil 1A">
    <location>
        <begin position="90"/>
        <end position="124"/>
    </location>
</feature>
<feature type="region of interest" description="Linker 1">
    <location>
        <begin position="125"/>
        <end position="135"/>
    </location>
</feature>
<feature type="region of interest" description="Coil 1B">
    <location>
        <begin position="136"/>
        <end position="236"/>
    </location>
</feature>
<feature type="region of interest" description="Linker 12">
    <location>
        <begin position="237"/>
        <end position="252"/>
    </location>
</feature>
<feature type="region of interest" description="Coil 2">
    <location>
        <begin position="253"/>
        <end position="396"/>
    </location>
</feature>
<feature type="region of interest" description="Tail">
    <location>
        <begin position="397"/>
        <end position="431"/>
    </location>
</feature>
<feature type="site" description="Stutter">
    <location>
        <position position="338"/>
    </location>
</feature>
<gene>
    <name type="primary">KRT40</name>
</gene>
<protein>
    <recommendedName>
        <fullName>Keratin, type I cytoskeletal 40</fullName>
    </recommendedName>
    <alternativeName>
        <fullName>Cytokeratin-40</fullName>
        <shortName>CK-40</shortName>
    </alternativeName>
    <alternativeName>
        <fullName>Keratin-40</fullName>
        <shortName>K40</shortName>
    </alternativeName>
</protein>
<keyword id="KW-0175">Coiled coil</keyword>
<keyword id="KW-0403">Intermediate filament</keyword>
<keyword id="KW-0416">Keratin</keyword>
<keyword id="KW-1185">Reference proteome</keyword>
<accession>A7YWM2</accession>
<comment type="function">
    <text evidence="1">May play a role in late hair differentiation.</text>
</comment>
<comment type="subunit">
    <text>Heterotetramer of two type I and two type II keratins.</text>
</comment>
<comment type="miscellaneous">
    <text>There are two types of cytoskeletal and microfibrillar keratin, I (acidic) and II (neutral to basic) (40-55 and 56-70 kDa, respectively).</text>
</comment>
<comment type="similarity">
    <text evidence="2">Belongs to the intermediate filament family.</text>
</comment>
<evidence type="ECO:0000250" key="1"/>
<evidence type="ECO:0000255" key="2">
    <source>
        <dbReference type="PROSITE-ProRule" id="PRU01188"/>
    </source>
</evidence>
<reference key="1">
    <citation type="submission" date="2007-03" db="EMBL/GenBank/DDBJ databases">
        <authorList>
            <consortium name="NIH - Mammalian Gene Collection (MGC) project"/>
        </authorList>
    </citation>
    <scope>NUCLEOTIDE SEQUENCE [LARGE SCALE MRNA]</scope>
    <source>
        <strain>Hereford</strain>
        <tissue>Fetal skin</tissue>
    </source>
</reference>
<organism>
    <name type="scientific">Bos taurus</name>
    <name type="common">Bovine</name>
    <dbReference type="NCBI Taxonomy" id="9913"/>
    <lineage>
        <taxon>Eukaryota</taxon>
        <taxon>Metazoa</taxon>
        <taxon>Chordata</taxon>
        <taxon>Craniata</taxon>
        <taxon>Vertebrata</taxon>
        <taxon>Euteleostomi</taxon>
        <taxon>Mammalia</taxon>
        <taxon>Eutheria</taxon>
        <taxon>Laurasiatheria</taxon>
        <taxon>Artiodactyla</taxon>
        <taxon>Ruminantia</taxon>
        <taxon>Pecora</taxon>
        <taxon>Bovidae</taxon>
        <taxon>Bovinae</taxon>
        <taxon>Bos</taxon>
    </lineage>
</organism>
<sequence length="431" mass="47820">MASDCSPTGCSSESSARASDCALASTCSVETTCLPSACATSSCQTPSFPSGARLPTGCLPPACFAGSCNIPCVVGNCAWCEDGVFNSNEKETMQFLNDRLASYLEKVRGLEELNAELECRIREQCEEDVPLVCPDYQCYFDTIEDLQQKILCTKAENCRLAVQLDNCKLAADDFRSKYESELSLRQLVETDISGLRGILGELTVCRSDLEAHVESLKDDLLCLKKSHEEEVNVLRGQLGDRLSVELDTAPTTDLNRVLDEMRCQYETVLANNRRDVEEWFAAQTEELNQQQLSSAEQLQGCQTEILELKRTANTLEIELQAQQSLTESLECTVAETEAQYSSELAQIQCLIDNVENQLAEIRCDLERQNQEYRVLLDTKARLECEINTYQGLLDSEDSRLPCNPCSATSMSNDTCEPCSAYVICTVENSCP</sequence>
<name>K1C40_BOVIN</name>
<dbReference type="EMBL" id="BC134653">
    <property type="protein sequence ID" value="AAI34654.1"/>
    <property type="molecule type" value="mRNA"/>
</dbReference>
<dbReference type="RefSeq" id="NP_001098888.1">
    <property type="nucleotide sequence ID" value="NM_001105418.1"/>
</dbReference>
<dbReference type="SMR" id="A7YWM2"/>
<dbReference type="FunCoup" id="A7YWM2">
    <property type="interactions" value="123"/>
</dbReference>
<dbReference type="STRING" id="9913.ENSBTAP00000023156"/>
<dbReference type="PaxDb" id="9913-ENSBTAP00000023156"/>
<dbReference type="PeptideAtlas" id="A7YWM2"/>
<dbReference type="Ensembl" id="ENSBTAT00000023156.7">
    <property type="protein sequence ID" value="ENSBTAP00000023156.5"/>
    <property type="gene ID" value="ENSBTAG00000017408.7"/>
</dbReference>
<dbReference type="GeneID" id="538611"/>
<dbReference type="KEGG" id="bta:538611"/>
<dbReference type="CTD" id="125115"/>
<dbReference type="VEuPathDB" id="HostDB:ENSBTAG00000017408"/>
<dbReference type="VGNC" id="VGNC:30733">
    <property type="gene designation" value="KRT40"/>
</dbReference>
<dbReference type="eggNOG" id="ENOG502SHG0">
    <property type="taxonomic scope" value="Eukaryota"/>
</dbReference>
<dbReference type="GeneTree" id="ENSGT00940000161968"/>
<dbReference type="HOGENOM" id="CLU_012560_8_0_1"/>
<dbReference type="InParanoid" id="A7YWM2"/>
<dbReference type="OMA" id="PCSPESC"/>
<dbReference type="OrthoDB" id="2441647at2759"/>
<dbReference type="TreeFam" id="TF332742"/>
<dbReference type="Reactome" id="R-BTA-6805567">
    <property type="pathway name" value="Keratinization"/>
</dbReference>
<dbReference type="Reactome" id="R-BTA-6809371">
    <property type="pathway name" value="Formation of the cornified envelope"/>
</dbReference>
<dbReference type="Proteomes" id="UP000009136">
    <property type="component" value="Chromosome 19"/>
</dbReference>
<dbReference type="Bgee" id="ENSBTAG00000017408">
    <property type="expression patterns" value="Expressed in zone of skin and 3 other cell types or tissues"/>
</dbReference>
<dbReference type="GO" id="GO:0005856">
    <property type="term" value="C:cytoskeleton"/>
    <property type="evidence" value="ECO:0000318"/>
    <property type="project" value="GO_Central"/>
</dbReference>
<dbReference type="GO" id="GO:0005882">
    <property type="term" value="C:intermediate filament"/>
    <property type="evidence" value="ECO:0007669"/>
    <property type="project" value="UniProtKB-KW"/>
</dbReference>
<dbReference type="GO" id="GO:0005198">
    <property type="term" value="F:structural molecule activity"/>
    <property type="evidence" value="ECO:0007669"/>
    <property type="project" value="InterPro"/>
</dbReference>
<dbReference type="GO" id="GO:0030855">
    <property type="term" value="P:epithelial cell differentiation"/>
    <property type="evidence" value="ECO:0000318"/>
    <property type="project" value="GO_Central"/>
</dbReference>
<dbReference type="GO" id="GO:0045109">
    <property type="term" value="P:intermediate filament organization"/>
    <property type="evidence" value="ECO:0000318"/>
    <property type="project" value="GO_Central"/>
</dbReference>
<dbReference type="FunFam" id="1.20.5.1160:FF:000002">
    <property type="entry name" value="Type I keratin 10"/>
    <property type="match status" value="1"/>
</dbReference>
<dbReference type="FunFam" id="1.20.5.170:FF:000002">
    <property type="entry name" value="Type I keratin KA11"/>
    <property type="match status" value="1"/>
</dbReference>
<dbReference type="FunFam" id="1.20.5.500:FF:000001">
    <property type="entry name" value="Type II keratin 23"/>
    <property type="match status" value="1"/>
</dbReference>
<dbReference type="Gene3D" id="1.20.5.170">
    <property type="match status" value="1"/>
</dbReference>
<dbReference type="Gene3D" id="1.20.5.500">
    <property type="entry name" value="Single helix bin"/>
    <property type="match status" value="1"/>
</dbReference>
<dbReference type="Gene3D" id="1.20.5.1160">
    <property type="entry name" value="Vasodilator-stimulated phosphoprotein"/>
    <property type="match status" value="1"/>
</dbReference>
<dbReference type="InterPro" id="IPR039008">
    <property type="entry name" value="IF_rod_dom"/>
</dbReference>
<dbReference type="InterPro" id="IPR002957">
    <property type="entry name" value="Keratin_I"/>
</dbReference>
<dbReference type="PANTHER" id="PTHR23239">
    <property type="entry name" value="INTERMEDIATE FILAMENT"/>
    <property type="match status" value="1"/>
</dbReference>
<dbReference type="PANTHER" id="PTHR23239:SF90">
    <property type="entry name" value="KERATIN, TYPE I CYTOSKELETAL 40"/>
    <property type="match status" value="1"/>
</dbReference>
<dbReference type="Pfam" id="PF00038">
    <property type="entry name" value="Filament"/>
    <property type="match status" value="1"/>
</dbReference>
<dbReference type="PRINTS" id="PR01248">
    <property type="entry name" value="TYPE1KERATIN"/>
</dbReference>
<dbReference type="SMART" id="SM01391">
    <property type="entry name" value="Filament"/>
    <property type="match status" value="1"/>
</dbReference>
<dbReference type="SUPFAM" id="SSF64593">
    <property type="entry name" value="Intermediate filament protein, coiled coil region"/>
    <property type="match status" value="2"/>
</dbReference>
<dbReference type="PROSITE" id="PS51842">
    <property type="entry name" value="IF_ROD_2"/>
    <property type="match status" value="1"/>
</dbReference>